<organism>
    <name type="scientific">Pectobacterium carotovorum subsp. carotovorum (strain PC1)</name>
    <dbReference type="NCBI Taxonomy" id="561230"/>
    <lineage>
        <taxon>Bacteria</taxon>
        <taxon>Pseudomonadati</taxon>
        <taxon>Pseudomonadota</taxon>
        <taxon>Gammaproteobacteria</taxon>
        <taxon>Enterobacterales</taxon>
        <taxon>Pectobacteriaceae</taxon>
        <taxon>Pectobacterium</taxon>
    </lineage>
</organism>
<name>Y1804_PECCP</name>
<comment type="similarity">
    <text evidence="1">Belongs to the UPF0502 family.</text>
</comment>
<accession>C6DFD6</accession>
<gene>
    <name type="ordered locus">PC1_1804</name>
</gene>
<reference key="1">
    <citation type="submission" date="2009-07" db="EMBL/GenBank/DDBJ databases">
        <title>Complete sequence of Pectobacterium carotovorum subsp. carotovorum PC1.</title>
        <authorList>
            <consortium name="US DOE Joint Genome Institute"/>
            <person name="Lucas S."/>
            <person name="Copeland A."/>
            <person name="Lapidus A."/>
            <person name="Glavina del Rio T."/>
            <person name="Tice H."/>
            <person name="Bruce D."/>
            <person name="Goodwin L."/>
            <person name="Pitluck S."/>
            <person name="Munk A.C."/>
            <person name="Brettin T."/>
            <person name="Detter J.C."/>
            <person name="Han C."/>
            <person name="Tapia R."/>
            <person name="Larimer F."/>
            <person name="Land M."/>
            <person name="Hauser L."/>
            <person name="Kyrpides N."/>
            <person name="Mikhailova N."/>
            <person name="Balakrishnan V."/>
            <person name="Glasner J."/>
            <person name="Perna N.T."/>
        </authorList>
    </citation>
    <scope>NUCLEOTIDE SEQUENCE [LARGE SCALE GENOMIC DNA]</scope>
    <source>
        <strain>PC1</strain>
    </source>
</reference>
<proteinExistence type="inferred from homology"/>
<dbReference type="EMBL" id="CP001657">
    <property type="protein sequence ID" value="ACT12845.1"/>
    <property type="molecule type" value="Genomic_DNA"/>
</dbReference>
<dbReference type="RefSeq" id="WP_015840051.1">
    <property type="nucleotide sequence ID" value="NC_012917.1"/>
</dbReference>
<dbReference type="SMR" id="C6DFD6"/>
<dbReference type="STRING" id="561230.PC1_1804"/>
<dbReference type="KEGG" id="pct:PC1_1804"/>
<dbReference type="eggNOG" id="COG3132">
    <property type="taxonomic scope" value="Bacteria"/>
</dbReference>
<dbReference type="HOGENOM" id="CLU_057831_2_0_6"/>
<dbReference type="OrthoDB" id="9784785at2"/>
<dbReference type="Proteomes" id="UP000002736">
    <property type="component" value="Chromosome"/>
</dbReference>
<dbReference type="Gene3D" id="1.10.10.10">
    <property type="entry name" value="Winged helix-like DNA-binding domain superfamily/Winged helix DNA-binding domain"/>
    <property type="match status" value="2"/>
</dbReference>
<dbReference type="HAMAP" id="MF_01584">
    <property type="entry name" value="UPF0502"/>
    <property type="match status" value="1"/>
</dbReference>
<dbReference type="InterPro" id="IPR007432">
    <property type="entry name" value="DUF480"/>
</dbReference>
<dbReference type="InterPro" id="IPR036388">
    <property type="entry name" value="WH-like_DNA-bd_sf"/>
</dbReference>
<dbReference type="InterPro" id="IPR036390">
    <property type="entry name" value="WH_DNA-bd_sf"/>
</dbReference>
<dbReference type="NCBIfam" id="NF008413">
    <property type="entry name" value="PRK11239.1"/>
    <property type="match status" value="1"/>
</dbReference>
<dbReference type="PANTHER" id="PTHR38768">
    <property type="entry name" value="UPF0502 PROTEIN YCEH"/>
    <property type="match status" value="1"/>
</dbReference>
<dbReference type="PANTHER" id="PTHR38768:SF1">
    <property type="entry name" value="UPF0502 PROTEIN YCEH"/>
    <property type="match status" value="1"/>
</dbReference>
<dbReference type="Pfam" id="PF04337">
    <property type="entry name" value="DUF480"/>
    <property type="match status" value="1"/>
</dbReference>
<dbReference type="SUPFAM" id="SSF46785">
    <property type="entry name" value="Winged helix' DNA-binding domain"/>
    <property type="match status" value="2"/>
</dbReference>
<feature type="chain" id="PRO_1000215627" description="UPF0502 protein PC1_1804">
    <location>
        <begin position="1"/>
        <end position="211"/>
    </location>
</feature>
<feature type="region of interest" description="Disordered" evidence="2">
    <location>
        <begin position="168"/>
        <end position="188"/>
    </location>
</feature>
<evidence type="ECO:0000255" key="1">
    <source>
        <dbReference type="HAMAP-Rule" id="MF_01584"/>
    </source>
</evidence>
<evidence type="ECO:0000256" key="2">
    <source>
        <dbReference type="SAM" id="MobiDB-lite"/>
    </source>
</evidence>
<sequence length="211" mass="23814">MKYQLDTREARVIGCMLEKQITTPDQYPMSLNGITTACNQKTNREPVMELSESEVQQTLDLLVKKHFLRTLSGFGNRVVKYEHRFCNSEFGDLKLSPAEVALVTTLLLRGPQTPGELRTRAARLYEFSDVSEAESTLEQLQQRDDGPFVVRLAREAGKRESRYRHLFSGDASDAAPEEEGAGDNSHQLTERVETLEKEVAELKRQLAALLA</sequence>
<protein>
    <recommendedName>
        <fullName evidence="1">UPF0502 protein PC1_1804</fullName>
    </recommendedName>
</protein>